<name>COXX_BURVG</name>
<reference key="1">
    <citation type="submission" date="2007-03" db="EMBL/GenBank/DDBJ databases">
        <title>Complete sequence of chromosome 1 of Burkholderia vietnamiensis G4.</title>
        <authorList>
            <consortium name="US DOE Joint Genome Institute"/>
            <person name="Copeland A."/>
            <person name="Lucas S."/>
            <person name="Lapidus A."/>
            <person name="Barry K."/>
            <person name="Detter J.C."/>
            <person name="Glavina del Rio T."/>
            <person name="Hammon N."/>
            <person name="Israni S."/>
            <person name="Dalin E."/>
            <person name="Tice H."/>
            <person name="Pitluck S."/>
            <person name="Chain P."/>
            <person name="Malfatti S."/>
            <person name="Shin M."/>
            <person name="Vergez L."/>
            <person name="Schmutz J."/>
            <person name="Larimer F."/>
            <person name="Land M."/>
            <person name="Hauser L."/>
            <person name="Kyrpides N."/>
            <person name="Tiedje J."/>
            <person name="Richardson P."/>
        </authorList>
    </citation>
    <scope>NUCLEOTIDE SEQUENCE [LARGE SCALE GENOMIC DNA]</scope>
    <source>
        <strain>G4 / LMG 22486</strain>
    </source>
</reference>
<gene>
    <name evidence="1" type="primary">ctaB</name>
    <name type="ordered locus">Bcep1808_2937</name>
</gene>
<comment type="function">
    <text evidence="1">Converts heme B (protoheme IX) to heme O by substitution of the vinyl group on carbon 2 of heme B porphyrin ring with a hydroxyethyl farnesyl side group.</text>
</comment>
<comment type="catalytic activity">
    <reaction evidence="1">
        <text>heme b + (2E,6E)-farnesyl diphosphate + H2O = Fe(II)-heme o + diphosphate</text>
        <dbReference type="Rhea" id="RHEA:28070"/>
        <dbReference type="ChEBI" id="CHEBI:15377"/>
        <dbReference type="ChEBI" id="CHEBI:33019"/>
        <dbReference type="ChEBI" id="CHEBI:60344"/>
        <dbReference type="ChEBI" id="CHEBI:60530"/>
        <dbReference type="ChEBI" id="CHEBI:175763"/>
        <dbReference type="EC" id="2.5.1.141"/>
    </reaction>
</comment>
<comment type="pathway">
    <text evidence="1">Porphyrin-containing compound metabolism; heme O biosynthesis; heme O from protoheme: step 1/1.</text>
</comment>
<comment type="subcellular location">
    <subcellularLocation>
        <location evidence="1">Cell inner membrane</location>
        <topology evidence="1">Multi-pass membrane protein</topology>
    </subcellularLocation>
</comment>
<comment type="miscellaneous">
    <text evidence="1">Carbon 2 of the heme B porphyrin ring is defined according to the Fischer nomenclature.</text>
</comment>
<comment type="similarity">
    <text evidence="1">Belongs to the UbiA prenyltransferase family. Protoheme IX farnesyltransferase subfamily.</text>
</comment>
<organism>
    <name type="scientific">Burkholderia vietnamiensis (strain G4 / LMG 22486)</name>
    <name type="common">Burkholderia cepacia (strain R1808)</name>
    <dbReference type="NCBI Taxonomy" id="269482"/>
    <lineage>
        <taxon>Bacteria</taxon>
        <taxon>Pseudomonadati</taxon>
        <taxon>Pseudomonadota</taxon>
        <taxon>Betaproteobacteria</taxon>
        <taxon>Burkholderiales</taxon>
        <taxon>Burkholderiaceae</taxon>
        <taxon>Burkholderia</taxon>
        <taxon>Burkholderia cepacia complex</taxon>
    </lineage>
</organism>
<dbReference type="EC" id="2.5.1.141" evidence="1"/>
<dbReference type="EMBL" id="CP000614">
    <property type="protein sequence ID" value="ABO55928.1"/>
    <property type="molecule type" value="Genomic_DNA"/>
</dbReference>
<dbReference type="SMR" id="A4JI25"/>
<dbReference type="KEGG" id="bvi:Bcep1808_2937"/>
<dbReference type="eggNOG" id="COG0109">
    <property type="taxonomic scope" value="Bacteria"/>
</dbReference>
<dbReference type="HOGENOM" id="CLU_029631_0_2_4"/>
<dbReference type="UniPathway" id="UPA00834">
    <property type="reaction ID" value="UER00712"/>
</dbReference>
<dbReference type="Proteomes" id="UP000002287">
    <property type="component" value="Chromosome 1"/>
</dbReference>
<dbReference type="GO" id="GO:0005886">
    <property type="term" value="C:plasma membrane"/>
    <property type="evidence" value="ECO:0007669"/>
    <property type="project" value="UniProtKB-SubCell"/>
</dbReference>
<dbReference type="GO" id="GO:0008495">
    <property type="term" value="F:protoheme IX farnesyltransferase activity"/>
    <property type="evidence" value="ECO:0007669"/>
    <property type="project" value="UniProtKB-UniRule"/>
</dbReference>
<dbReference type="GO" id="GO:0048034">
    <property type="term" value="P:heme O biosynthetic process"/>
    <property type="evidence" value="ECO:0007669"/>
    <property type="project" value="UniProtKB-UniRule"/>
</dbReference>
<dbReference type="CDD" id="cd13957">
    <property type="entry name" value="PT_UbiA_Cox10"/>
    <property type="match status" value="1"/>
</dbReference>
<dbReference type="Gene3D" id="1.10.357.140">
    <property type="entry name" value="UbiA prenyltransferase"/>
    <property type="match status" value="1"/>
</dbReference>
<dbReference type="HAMAP" id="MF_00154">
    <property type="entry name" value="CyoE_CtaB"/>
    <property type="match status" value="1"/>
</dbReference>
<dbReference type="InterPro" id="IPR006369">
    <property type="entry name" value="Protohaem_IX_farnesylTrfase"/>
</dbReference>
<dbReference type="InterPro" id="IPR000537">
    <property type="entry name" value="UbiA_prenyltransferase"/>
</dbReference>
<dbReference type="InterPro" id="IPR030470">
    <property type="entry name" value="UbiA_prenylTrfase_CS"/>
</dbReference>
<dbReference type="InterPro" id="IPR044878">
    <property type="entry name" value="UbiA_sf"/>
</dbReference>
<dbReference type="NCBIfam" id="TIGR01473">
    <property type="entry name" value="cyoE_ctaB"/>
    <property type="match status" value="1"/>
</dbReference>
<dbReference type="NCBIfam" id="NF003349">
    <property type="entry name" value="PRK04375.1-2"/>
    <property type="match status" value="1"/>
</dbReference>
<dbReference type="PANTHER" id="PTHR43448:SF7">
    <property type="entry name" value="4-HYDROXYBENZOATE SOLANESYLTRANSFERASE"/>
    <property type="match status" value="1"/>
</dbReference>
<dbReference type="PANTHER" id="PTHR43448">
    <property type="entry name" value="PROTOHEME IX FARNESYLTRANSFERASE, MITOCHONDRIAL"/>
    <property type="match status" value="1"/>
</dbReference>
<dbReference type="Pfam" id="PF01040">
    <property type="entry name" value="UbiA"/>
    <property type="match status" value="1"/>
</dbReference>
<dbReference type="PROSITE" id="PS00943">
    <property type="entry name" value="UBIA"/>
    <property type="match status" value="1"/>
</dbReference>
<protein>
    <recommendedName>
        <fullName evidence="1">Protoheme IX farnesyltransferase</fullName>
        <ecNumber evidence="1">2.5.1.141</ecNumber>
    </recommendedName>
    <alternativeName>
        <fullName evidence="1">Heme B farnesyltransferase</fullName>
    </alternativeName>
    <alternativeName>
        <fullName evidence="1">Heme O synthase</fullName>
    </alternativeName>
</protein>
<sequence>MQSILSQSPGSRFSQYMALTKPRVTQLAVFCAVIGMFLATPGMVPWRVLIGGTVGIWLLAGAAFAINCLVEQKIDAMMRRTAWRPSARGEITTPQILLFSAVLGSIGAWTLYTFTNPLTMWLTIATFVGYAVIYTLLLKPMTPQNIVIGGASGAMPPALGWAAVTGAVPGDAWILVLIIFVWTPPHFWVLALYRRKDYENAGLPMLPVTHGEQYTRLHILLYTVILFAVTLMPFISGMSGAVYLTSAVLLGAVFLAYAWKIYRDYSDALARKAFRYSIVYLSLLFAALLVDHYARPLLGV</sequence>
<feature type="chain" id="PRO_0000327034" description="Protoheme IX farnesyltransferase">
    <location>
        <begin position="1"/>
        <end position="300"/>
    </location>
</feature>
<feature type="transmembrane region" description="Helical" evidence="1">
    <location>
        <begin position="24"/>
        <end position="44"/>
    </location>
</feature>
<feature type="transmembrane region" description="Helical" evidence="1">
    <location>
        <begin position="48"/>
        <end position="68"/>
    </location>
</feature>
<feature type="transmembrane region" description="Helical" evidence="1">
    <location>
        <begin position="94"/>
        <end position="114"/>
    </location>
</feature>
<feature type="transmembrane region" description="Helical" evidence="1">
    <location>
        <begin position="118"/>
        <end position="138"/>
    </location>
</feature>
<feature type="transmembrane region" description="Helical" evidence="1">
    <location>
        <begin position="146"/>
        <end position="166"/>
    </location>
</feature>
<feature type="transmembrane region" description="Helical" evidence="1">
    <location>
        <begin position="172"/>
        <end position="192"/>
    </location>
</feature>
<feature type="transmembrane region" description="Helical" evidence="1">
    <location>
        <begin position="217"/>
        <end position="237"/>
    </location>
</feature>
<feature type="transmembrane region" description="Helical" evidence="1">
    <location>
        <begin position="239"/>
        <end position="259"/>
    </location>
</feature>
<feature type="transmembrane region" description="Helical" evidence="1">
    <location>
        <begin position="278"/>
        <end position="298"/>
    </location>
</feature>
<accession>A4JI25</accession>
<proteinExistence type="inferred from homology"/>
<keyword id="KW-0997">Cell inner membrane</keyword>
<keyword id="KW-1003">Cell membrane</keyword>
<keyword id="KW-0350">Heme biosynthesis</keyword>
<keyword id="KW-0472">Membrane</keyword>
<keyword id="KW-0808">Transferase</keyword>
<keyword id="KW-0812">Transmembrane</keyword>
<keyword id="KW-1133">Transmembrane helix</keyword>
<evidence type="ECO:0000255" key="1">
    <source>
        <dbReference type="HAMAP-Rule" id="MF_00154"/>
    </source>
</evidence>